<accession>Q9SD05</accession>
<organism evidence="10">
    <name type="scientific">Arabidopsis thaliana</name>
    <name type="common">Mouse-ear cress</name>
    <dbReference type="NCBI Taxonomy" id="3702"/>
    <lineage>
        <taxon>Eukaryota</taxon>
        <taxon>Viridiplantae</taxon>
        <taxon>Streptophyta</taxon>
        <taxon>Embryophyta</taxon>
        <taxon>Tracheophyta</taxon>
        <taxon>Spermatophyta</taxon>
        <taxon>Magnoliopsida</taxon>
        <taxon>eudicotyledons</taxon>
        <taxon>Gunneridae</taxon>
        <taxon>Pentapetalae</taxon>
        <taxon>rosids</taxon>
        <taxon>malvids</taxon>
        <taxon>Brassicales</taxon>
        <taxon>Brassicaceae</taxon>
        <taxon>Camelineae</taxon>
        <taxon>Arabidopsis</taxon>
    </lineage>
</organism>
<evidence type="ECO:0000250" key="1"/>
<evidence type="ECO:0000250" key="2">
    <source>
        <dbReference type="UniProtKB" id="Q9SD07"/>
    </source>
</evidence>
<evidence type="ECO:0000255" key="3"/>
<evidence type="ECO:0000255" key="4">
    <source>
        <dbReference type="PROSITE-ProRule" id="PRU00498"/>
    </source>
</evidence>
<evidence type="ECO:0000269" key="5">
    <source>
    </source>
</evidence>
<evidence type="ECO:0000303" key="6">
    <source>
    </source>
</evidence>
<evidence type="ECO:0000305" key="7"/>
<evidence type="ECO:0000312" key="8">
    <source>
        <dbReference type="Araport" id="AT3G51440"/>
    </source>
</evidence>
<evidence type="ECO:0000312" key="9">
    <source>
        <dbReference type="EMBL" id="CAB63008.1"/>
    </source>
</evidence>
<evidence type="ECO:0000312" key="10">
    <source>
        <dbReference type="Proteomes" id="UP000006548"/>
    </source>
</evidence>
<protein>
    <recommendedName>
        <fullName evidence="6">Protein STRICTOSIDINE SYNTHASE-LIKE 6</fullName>
        <shortName evidence="6">AtSSL6</shortName>
    </recommendedName>
</protein>
<proteinExistence type="evidence at transcript level"/>
<name>SSL6_ARATH</name>
<reference key="1">
    <citation type="journal article" date="2000" name="Nature">
        <title>Sequence and analysis of chromosome 3 of the plant Arabidopsis thaliana.</title>
        <authorList>
            <person name="Salanoubat M."/>
            <person name="Lemcke K."/>
            <person name="Rieger M."/>
            <person name="Ansorge W."/>
            <person name="Unseld M."/>
            <person name="Fartmann B."/>
            <person name="Valle G."/>
            <person name="Bloecker H."/>
            <person name="Perez-Alonso M."/>
            <person name="Obermaier B."/>
            <person name="Delseny M."/>
            <person name="Boutry M."/>
            <person name="Grivell L.A."/>
            <person name="Mache R."/>
            <person name="Puigdomenech P."/>
            <person name="De Simone V."/>
            <person name="Choisne N."/>
            <person name="Artiguenave F."/>
            <person name="Robert C."/>
            <person name="Brottier P."/>
            <person name="Wincker P."/>
            <person name="Cattolico L."/>
            <person name="Weissenbach J."/>
            <person name="Saurin W."/>
            <person name="Quetier F."/>
            <person name="Schaefer M."/>
            <person name="Mueller-Auer S."/>
            <person name="Gabel C."/>
            <person name="Fuchs M."/>
            <person name="Benes V."/>
            <person name="Wurmbach E."/>
            <person name="Drzonek H."/>
            <person name="Erfle H."/>
            <person name="Jordan N."/>
            <person name="Bangert S."/>
            <person name="Wiedelmann R."/>
            <person name="Kranz H."/>
            <person name="Voss H."/>
            <person name="Holland R."/>
            <person name="Brandt P."/>
            <person name="Nyakatura G."/>
            <person name="Vezzi A."/>
            <person name="D'Angelo M."/>
            <person name="Pallavicini A."/>
            <person name="Toppo S."/>
            <person name="Simionati B."/>
            <person name="Conrad A."/>
            <person name="Hornischer K."/>
            <person name="Kauer G."/>
            <person name="Loehnert T.-H."/>
            <person name="Nordsiek G."/>
            <person name="Reichelt J."/>
            <person name="Scharfe M."/>
            <person name="Schoen O."/>
            <person name="Bargues M."/>
            <person name="Terol J."/>
            <person name="Climent J."/>
            <person name="Navarro P."/>
            <person name="Collado C."/>
            <person name="Perez-Perez A."/>
            <person name="Ottenwaelder B."/>
            <person name="Duchemin D."/>
            <person name="Cooke R."/>
            <person name="Laudie M."/>
            <person name="Berger-Llauro C."/>
            <person name="Purnelle B."/>
            <person name="Masuy D."/>
            <person name="de Haan M."/>
            <person name="Maarse A.C."/>
            <person name="Alcaraz J.-P."/>
            <person name="Cottet A."/>
            <person name="Casacuberta E."/>
            <person name="Monfort A."/>
            <person name="Argiriou A."/>
            <person name="Flores M."/>
            <person name="Liguori R."/>
            <person name="Vitale D."/>
            <person name="Mannhaupt G."/>
            <person name="Haase D."/>
            <person name="Schoof H."/>
            <person name="Rudd S."/>
            <person name="Zaccaria P."/>
            <person name="Mewes H.-W."/>
            <person name="Mayer K.F.X."/>
            <person name="Kaul S."/>
            <person name="Town C.D."/>
            <person name="Koo H.L."/>
            <person name="Tallon L.J."/>
            <person name="Jenkins J."/>
            <person name="Rooney T."/>
            <person name="Rizzo M."/>
            <person name="Walts A."/>
            <person name="Utterback T."/>
            <person name="Fujii C.Y."/>
            <person name="Shea T.P."/>
            <person name="Creasy T.H."/>
            <person name="Haas B."/>
            <person name="Maiti R."/>
            <person name="Wu D."/>
            <person name="Peterson J."/>
            <person name="Van Aken S."/>
            <person name="Pai G."/>
            <person name="Militscher J."/>
            <person name="Sellers P."/>
            <person name="Gill J.E."/>
            <person name="Feldblyum T.V."/>
            <person name="Preuss D."/>
            <person name="Lin X."/>
            <person name="Nierman W.C."/>
            <person name="Salzberg S.L."/>
            <person name="White O."/>
            <person name="Venter J.C."/>
            <person name="Fraser C.M."/>
            <person name="Kaneko T."/>
            <person name="Nakamura Y."/>
            <person name="Sato S."/>
            <person name="Kato T."/>
            <person name="Asamizu E."/>
            <person name="Sasamoto S."/>
            <person name="Kimura T."/>
            <person name="Idesawa K."/>
            <person name="Kawashima K."/>
            <person name="Kishida Y."/>
            <person name="Kiyokawa C."/>
            <person name="Kohara M."/>
            <person name="Matsumoto M."/>
            <person name="Matsuno A."/>
            <person name="Muraki A."/>
            <person name="Nakayama S."/>
            <person name="Nakazaki N."/>
            <person name="Shinpo S."/>
            <person name="Takeuchi C."/>
            <person name="Wada T."/>
            <person name="Watanabe A."/>
            <person name="Yamada M."/>
            <person name="Yasuda M."/>
            <person name="Tabata S."/>
        </authorList>
    </citation>
    <scope>NUCLEOTIDE SEQUENCE [LARGE SCALE GENOMIC DNA]</scope>
    <source>
        <strain>cv. Columbia</strain>
    </source>
</reference>
<reference key="2">
    <citation type="journal article" date="2017" name="Plant J.">
        <title>Araport11: a complete reannotation of the Arabidopsis thaliana reference genome.</title>
        <authorList>
            <person name="Cheng C.Y."/>
            <person name="Krishnakumar V."/>
            <person name="Chan A.P."/>
            <person name="Thibaud-Nissen F."/>
            <person name="Schobel S."/>
            <person name="Town C.D."/>
        </authorList>
    </citation>
    <scope>GENOME REANNOTATION</scope>
    <source>
        <strain>cv. Columbia</strain>
    </source>
</reference>
<reference key="3">
    <citation type="journal article" date="2003" name="Science">
        <title>Empirical analysis of transcriptional activity in the Arabidopsis genome.</title>
        <authorList>
            <person name="Yamada K."/>
            <person name="Lim J."/>
            <person name="Dale J.M."/>
            <person name="Chen H."/>
            <person name="Shinn P."/>
            <person name="Palm C.J."/>
            <person name="Southwick A.M."/>
            <person name="Wu H.C."/>
            <person name="Kim C.J."/>
            <person name="Nguyen M."/>
            <person name="Pham P.K."/>
            <person name="Cheuk R.F."/>
            <person name="Karlin-Newmann G."/>
            <person name="Liu S.X."/>
            <person name="Lam B."/>
            <person name="Sakano H."/>
            <person name="Wu T."/>
            <person name="Yu G."/>
            <person name="Miranda M."/>
            <person name="Quach H.L."/>
            <person name="Tripp M."/>
            <person name="Chang C.H."/>
            <person name="Lee J.M."/>
            <person name="Toriumi M.J."/>
            <person name="Chan M.M."/>
            <person name="Tang C.C."/>
            <person name="Onodera C.S."/>
            <person name="Deng J.M."/>
            <person name="Akiyama K."/>
            <person name="Ansari Y."/>
            <person name="Arakawa T."/>
            <person name="Banh J."/>
            <person name="Banno F."/>
            <person name="Bowser L."/>
            <person name="Brooks S.Y."/>
            <person name="Carninci P."/>
            <person name="Chao Q."/>
            <person name="Choy N."/>
            <person name="Enju A."/>
            <person name="Goldsmith A.D."/>
            <person name="Gurjal M."/>
            <person name="Hansen N.F."/>
            <person name="Hayashizaki Y."/>
            <person name="Johnson-Hopson C."/>
            <person name="Hsuan V.W."/>
            <person name="Iida K."/>
            <person name="Karnes M."/>
            <person name="Khan S."/>
            <person name="Koesema E."/>
            <person name="Ishida J."/>
            <person name="Jiang P.X."/>
            <person name="Jones T."/>
            <person name="Kawai J."/>
            <person name="Kamiya A."/>
            <person name="Meyers C."/>
            <person name="Nakajima M."/>
            <person name="Narusaka M."/>
            <person name="Seki M."/>
            <person name="Sakurai T."/>
            <person name="Satou M."/>
            <person name="Tamse R."/>
            <person name="Vaysberg M."/>
            <person name="Wallender E.K."/>
            <person name="Wong C."/>
            <person name="Yamamura Y."/>
            <person name="Yuan S."/>
            <person name="Shinozaki K."/>
            <person name="Davis R.W."/>
            <person name="Theologis A."/>
            <person name="Ecker J.R."/>
        </authorList>
    </citation>
    <scope>NUCLEOTIDE SEQUENCE [LARGE SCALE MRNA]</scope>
    <source>
        <strain>cv. Columbia</strain>
    </source>
</reference>
<reference key="4">
    <citation type="journal article" date="2000" name="Biochem. Biophys. Res. Commun.">
        <title>Animal and plant members of a gene family with similarity to alkaloid-synthesizing enzymes.</title>
        <authorList>
            <person name="Fabbri M."/>
            <person name="Delp G."/>
            <person name="Schmidt O."/>
            <person name="Theopold U."/>
        </authorList>
    </citation>
    <scope>GENE FAMILY</scope>
    <scope>NOMENCLATURE</scope>
</reference>
<reference key="5">
    <citation type="journal article" date="2009" name="Plant Biol.">
        <title>Phylogenetic and transcriptional analysis of a strictosidine synthase-like gene family in Arabidopsis thaliana reveals involvement in plant defence responses.</title>
        <authorList>
            <person name="Sohani M.M."/>
            <person name="Schenk P.M."/>
            <person name="Schultz C.J."/>
            <person name="Schmidt O."/>
        </authorList>
    </citation>
    <scope>INDUCTION BY BIOTIC AND ABIOTIC STRESSES</scope>
    <scope>GENE FAMILY</scope>
    <source>
        <strain>cv. Columbia</strain>
    </source>
</reference>
<gene>
    <name evidence="6" type="primary">SSL6</name>
    <name evidence="8" type="ordered locus">At3g51440</name>
    <name evidence="9" type="ORF">F26O13.80</name>
</gene>
<feature type="signal peptide" evidence="3">
    <location>
        <begin position="1"/>
        <end position="21"/>
    </location>
</feature>
<feature type="chain" id="PRO_0000431593" description="Protein STRICTOSIDINE SYNTHASE-LIKE 6" evidence="3">
    <location>
        <begin position="22"/>
        <end position="371"/>
    </location>
</feature>
<feature type="modified residue" description="Phosphotyrosine" evidence="2">
    <location>
        <position position="303"/>
    </location>
</feature>
<feature type="glycosylation site" description="N-linked (GlcNAc...) asparagine" evidence="4">
    <location>
        <position position="101"/>
    </location>
</feature>
<feature type="glycosylation site" description="N-linked (GlcNAc...) asparagine" evidence="4">
    <location>
        <position position="137"/>
    </location>
</feature>
<comment type="subcellular location">
    <subcellularLocation>
        <location evidence="1">Vacuole</location>
    </subcellularLocation>
</comment>
<comment type="induction">
    <text evidence="5">By salicylic acid (SA), jasmonic acid (MJ), ethylene (ET), wounding in local tissues, and infection with the fungal pathogen A.brassicicola and cucumber mosaic virus (CMV), both in local and systemic tissues.</text>
</comment>
<comment type="similarity">
    <text evidence="7">Belongs to the strictosidine synthase family.</text>
</comment>
<keyword id="KW-0325">Glycoprotein</keyword>
<keyword id="KW-0597">Phosphoprotein</keyword>
<keyword id="KW-1185">Reference proteome</keyword>
<keyword id="KW-0732">Signal</keyword>
<keyword id="KW-0926">Vacuole</keyword>
<dbReference type="EMBL" id="AL133452">
    <property type="protein sequence ID" value="CAB63008.1"/>
    <property type="molecule type" value="Genomic_DNA"/>
</dbReference>
<dbReference type="EMBL" id="CP002686">
    <property type="protein sequence ID" value="AEE78793.1"/>
    <property type="molecule type" value="Genomic_DNA"/>
</dbReference>
<dbReference type="EMBL" id="AF360274">
    <property type="protein sequence ID" value="AAK25984.1"/>
    <property type="molecule type" value="mRNA"/>
</dbReference>
<dbReference type="EMBL" id="AY142567">
    <property type="protein sequence ID" value="AAN13136.1"/>
    <property type="molecule type" value="mRNA"/>
</dbReference>
<dbReference type="PIR" id="T45775">
    <property type="entry name" value="T45775"/>
</dbReference>
<dbReference type="RefSeq" id="NP_190712.1">
    <property type="nucleotide sequence ID" value="NM_115003.3"/>
</dbReference>
<dbReference type="SMR" id="Q9SD05"/>
<dbReference type="FunCoup" id="Q9SD05">
    <property type="interactions" value="1"/>
</dbReference>
<dbReference type="STRING" id="3702.Q9SD05"/>
<dbReference type="GlyCosmos" id="Q9SD05">
    <property type="glycosylation" value="2 sites, No reported glycans"/>
</dbReference>
<dbReference type="GlyGen" id="Q9SD05">
    <property type="glycosylation" value="2 sites"/>
</dbReference>
<dbReference type="iPTMnet" id="Q9SD05"/>
<dbReference type="PaxDb" id="3702-AT3G51440.1"/>
<dbReference type="ProteomicsDB" id="228325"/>
<dbReference type="EnsemblPlants" id="AT3G51440.1">
    <property type="protein sequence ID" value="AT3G51440.1"/>
    <property type="gene ID" value="AT3G51440"/>
</dbReference>
<dbReference type="GeneID" id="824307"/>
<dbReference type="Gramene" id="AT3G51440.1">
    <property type="protein sequence ID" value="AT3G51440.1"/>
    <property type="gene ID" value="AT3G51440"/>
</dbReference>
<dbReference type="KEGG" id="ath:AT3G51440"/>
<dbReference type="Araport" id="AT3G51440"/>
<dbReference type="TAIR" id="AT3G51440"/>
<dbReference type="eggNOG" id="KOG1520">
    <property type="taxonomic scope" value="Eukaryota"/>
</dbReference>
<dbReference type="HOGENOM" id="CLU_023267_0_2_1"/>
<dbReference type="InParanoid" id="Q9SD05"/>
<dbReference type="OMA" id="MIFMANA"/>
<dbReference type="OrthoDB" id="5307922at2759"/>
<dbReference type="PhylomeDB" id="Q9SD05"/>
<dbReference type="BRENDA" id="4.3.3.2">
    <property type="organism ID" value="399"/>
</dbReference>
<dbReference type="PRO" id="PR:Q9SD05"/>
<dbReference type="Proteomes" id="UP000006548">
    <property type="component" value="Chromosome 3"/>
</dbReference>
<dbReference type="ExpressionAtlas" id="Q9SD05">
    <property type="expression patterns" value="baseline and differential"/>
</dbReference>
<dbReference type="GO" id="GO:0005783">
    <property type="term" value="C:endoplasmic reticulum"/>
    <property type="evidence" value="ECO:0007005"/>
    <property type="project" value="TAIR"/>
</dbReference>
<dbReference type="GO" id="GO:0005773">
    <property type="term" value="C:vacuole"/>
    <property type="evidence" value="ECO:0007669"/>
    <property type="project" value="UniProtKB-SubCell"/>
</dbReference>
<dbReference type="GO" id="GO:0009723">
    <property type="term" value="P:response to ethylene"/>
    <property type="evidence" value="ECO:0000270"/>
    <property type="project" value="UniProtKB"/>
</dbReference>
<dbReference type="GO" id="GO:0009620">
    <property type="term" value="P:response to fungus"/>
    <property type="evidence" value="ECO:0000270"/>
    <property type="project" value="UniProtKB"/>
</dbReference>
<dbReference type="GO" id="GO:0009753">
    <property type="term" value="P:response to jasmonic acid"/>
    <property type="evidence" value="ECO:0000270"/>
    <property type="project" value="UniProtKB"/>
</dbReference>
<dbReference type="GO" id="GO:0009751">
    <property type="term" value="P:response to salicylic acid"/>
    <property type="evidence" value="ECO:0000270"/>
    <property type="project" value="UniProtKB"/>
</dbReference>
<dbReference type="GO" id="GO:0009615">
    <property type="term" value="P:response to virus"/>
    <property type="evidence" value="ECO:0000270"/>
    <property type="project" value="UniProtKB"/>
</dbReference>
<dbReference type="GO" id="GO:0009611">
    <property type="term" value="P:response to wounding"/>
    <property type="evidence" value="ECO:0000270"/>
    <property type="project" value="UniProtKB"/>
</dbReference>
<dbReference type="FunFam" id="2.120.10.30:FF:000073">
    <property type="entry name" value="Protein STRICTOSIDINE SYNTHASE-LIKE 6"/>
    <property type="match status" value="1"/>
</dbReference>
<dbReference type="Gene3D" id="2.120.10.30">
    <property type="entry name" value="TolB, C-terminal domain"/>
    <property type="match status" value="1"/>
</dbReference>
<dbReference type="InterPro" id="IPR011042">
    <property type="entry name" value="6-blade_b-propeller_TolB-like"/>
</dbReference>
<dbReference type="InterPro" id="IPR018119">
    <property type="entry name" value="Strictosidine_synth_cons-reg"/>
</dbReference>
<dbReference type="PANTHER" id="PTHR10426:SF88">
    <property type="entry name" value="ADIPOCYTE PLASMA MEMBRANE-ASSOCIATED PROTEIN HEMOMUCIN-RELATED"/>
    <property type="match status" value="1"/>
</dbReference>
<dbReference type="PANTHER" id="PTHR10426">
    <property type="entry name" value="STRICTOSIDINE SYNTHASE-RELATED"/>
    <property type="match status" value="1"/>
</dbReference>
<dbReference type="Pfam" id="PF20067">
    <property type="entry name" value="SSL_N"/>
    <property type="match status" value="1"/>
</dbReference>
<dbReference type="Pfam" id="PF03088">
    <property type="entry name" value="Str_synth"/>
    <property type="match status" value="1"/>
</dbReference>
<dbReference type="SUPFAM" id="SSF63829">
    <property type="entry name" value="Calcium-dependent phosphotriesterase"/>
    <property type="match status" value="1"/>
</dbReference>
<sequence>MPVFLSSRFLFFCIIVPLLISITLYQLDTFDPAHHPADSLISSTASIPPLINERFLTGAEFIGVGLLNSPEDIAYHEDSGFIYTGCVDGWVKRVKVAESVNDSLVEDLVNTGGRPLGIAFGIHGEVIVADAYKGLLNISGDGKKTELLTEEADGVRFKLPDAVTVADNGVLYFTDGSYKYNLHQFSFDILEGKPHGRLMSFDPTTKVTRVLLRDLYFANGVSLSPDQTHLVFCETPIRRCSKYYINGGRVELFIQGLPGYPDNIRYDGDGHYWIAMPSGVTTLWKLSMKYPFLRKITAMAAKYGYEPMFMENAGVLQVDLDGNPIAYYHDQALSHITTGVKIGNYLYCGSLWHSHILRLDLLKYPAQNKKL</sequence>